<feature type="chain" id="PRO_0000233149" description="Cell division cycle and apoptosis regulator protein 1">
    <location>
        <begin position="1"/>
        <end position="1146"/>
    </location>
</feature>
<feature type="domain" description="SAP" evidence="4">
    <location>
        <begin position="633"/>
        <end position="667"/>
    </location>
</feature>
<feature type="region of interest" description="Interaction with AR" evidence="2">
    <location>
        <begin position="1"/>
        <end position="246"/>
    </location>
</feature>
<feature type="region of interest" description="Interaction with GATA2" evidence="2">
    <location>
        <begin position="200"/>
        <end position="657"/>
    </location>
</feature>
<feature type="region of interest" description="Disordered" evidence="5">
    <location>
        <begin position="282"/>
        <end position="351"/>
    </location>
</feature>
<feature type="region of interest" description="Disordered" evidence="5">
    <location>
        <begin position="599"/>
        <end position="635"/>
    </location>
</feature>
<feature type="region of interest" description="Interaction with GATA1" evidence="8">
    <location>
        <begin position="640"/>
        <end position="1146"/>
    </location>
</feature>
<feature type="region of interest" description="Disordered" evidence="5">
    <location>
        <begin position="671"/>
        <end position="716"/>
    </location>
</feature>
<feature type="region of interest" description="Disordered" evidence="5">
    <location>
        <begin position="793"/>
        <end position="912"/>
    </location>
</feature>
<feature type="coiled-coil region" evidence="3">
    <location>
        <begin position="591"/>
        <end position="615"/>
    </location>
</feature>
<feature type="coiled-coil region" evidence="3">
    <location>
        <begin position="1029"/>
        <end position="1110"/>
    </location>
</feature>
<feature type="compositionally biased region" description="Basic and acidic residues" evidence="5">
    <location>
        <begin position="290"/>
        <end position="331"/>
    </location>
</feature>
<feature type="compositionally biased region" description="Basic and acidic residues" evidence="5">
    <location>
        <begin position="338"/>
        <end position="349"/>
    </location>
</feature>
<feature type="compositionally biased region" description="Acidic residues" evidence="5">
    <location>
        <begin position="608"/>
        <end position="618"/>
    </location>
</feature>
<feature type="compositionally biased region" description="Basic and acidic residues" evidence="5">
    <location>
        <begin position="671"/>
        <end position="684"/>
    </location>
</feature>
<feature type="compositionally biased region" description="Basic and acidic residues" evidence="5">
    <location>
        <begin position="691"/>
        <end position="716"/>
    </location>
</feature>
<feature type="compositionally biased region" description="Basic and acidic residues" evidence="5">
    <location>
        <begin position="793"/>
        <end position="814"/>
    </location>
</feature>
<feature type="compositionally biased region" description="Basic and acidic residues" evidence="5">
    <location>
        <begin position="829"/>
        <end position="852"/>
    </location>
</feature>
<feature type="compositionally biased region" description="Acidic residues" evidence="5">
    <location>
        <begin position="853"/>
        <end position="884"/>
    </location>
</feature>
<feature type="compositionally biased region" description="Basic and acidic residues" evidence="5">
    <location>
        <begin position="885"/>
        <end position="912"/>
    </location>
</feature>
<feature type="modified residue" description="Phosphoserine" evidence="2">
    <location>
        <position position="453"/>
    </location>
</feature>
<feature type="modified residue" description="Phosphothreonine" evidence="2">
    <location>
        <position position="624"/>
    </location>
</feature>
<feature type="modified residue" description="Phosphothreonine" evidence="2">
    <location>
        <position position="664"/>
    </location>
</feature>
<feature type="modified residue" description="Phosphoserine" evidence="2">
    <location>
        <position position="682"/>
    </location>
</feature>
<feature type="modified residue" description="Phosphoserine" evidence="2">
    <location>
        <position position="694"/>
    </location>
</feature>
<feature type="modified residue" description="Phosphothreonine" evidence="2">
    <location>
        <position position="858"/>
    </location>
</feature>
<feature type="cross-link" description="Glycyl lysine isopeptide (Lys-Gly) (interchain with G-Cter in ubiquitin)" evidence="2">
    <location>
        <position position="634"/>
    </location>
</feature>
<feature type="cross-link" description="Glycyl lysine isopeptide (Lys-Gly) (interchain with G-Cter in SUMO1); alternate" evidence="2">
    <location>
        <position position="1008"/>
    </location>
</feature>
<feature type="cross-link" description="Glycyl lysine isopeptide (Lys-Gly) (interchain with G-Cter in SUMO2); alternate" evidence="2">
    <location>
        <position position="1008"/>
    </location>
</feature>
<feature type="cross-link" description="Glycyl lysine isopeptide (Lys-Gly) (interchain with G-Cter in SUMO2)" evidence="2">
    <location>
        <position position="1063"/>
    </location>
</feature>
<feature type="cross-link" description="Glycyl lysine isopeptide (Lys-Gly) (interchain with G-Cter in SUMO2)" evidence="2">
    <location>
        <position position="1131"/>
    </location>
</feature>
<feature type="splice variant" id="VSP_018054" description="In isoform 2." evidence="9">
    <original>SRERDRERRRSR</original>
    <variation>RYVLRQCGGLEK</variation>
    <location>
        <begin position="316"/>
        <end position="327"/>
    </location>
</feature>
<feature type="splice variant" id="VSP_018055" description="In isoform 2." evidence="9">
    <location>
        <begin position="328"/>
        <end position="1146"/>
    </location>
</feature>
<feature type="splice variant" id="VSP_037737" description="In isoform 3." evidence="9">
    <location>
        <begin position="638"/>
        <end position="699"/>
    </location>
</feature>
<feature type="sequence conflict" description="In Ref. 3; AAH79652." evidence="10" ref="3">
    <original>P</original>
    <variation>L</variation>
    <location>
        <position position="279"/>
    </location>
</feature>
<feature type="sequence conflict" description="In Ref. 3; AAH39939." evidence="10" ref="3">
    <original>T</original>
    <variation>A</variation>
    <location>
        <position position="558"/>
    </location>
</feature>
<feature type="sequence conflict" description="In Ref. 2; BAC37267." evidence="10" ref="2">
    <original>K</original>
    <variation>E</variation>
    <location>
        <position position="802"/>
    </location>
</feature>
<feature type="sequence conflict" description="In Ref. 2; BAC37267." evidence="10" ref="2">
    <original>E</original>
    <variation>G</variation>
    <location>
        <position position="821"/>
    </location>
</feature>
<accession>Q8CH18</accession>
<accession>Q05BR1</accession>
<accession>Q05DK6</accession>
<accession>Q6AXC9</accession>
<accession>Q6PAR2</accession>
<accession>Q80XE4</accession>
<accession>Q8BJY0</accession>
<accession>Q8BVN2</accession>
<accession>Q8CGG1</accession>
<accession>Q9CSR5</accession>
<evidence type="ECO:0000250" key="1"/>
<evidence type="ECO:0000250" key="2">
    <source>
        <dbReference type="UniProtKB" id="Q8IX12"/>
    </source>
</evidence>
<evidence type="ECO:0000255" key="3"/>
<evidence type="ECO:0000255" key="4">
    <source>
        <dbReference type="PROSITE-ProRule" id="PRU00186"/>
    </source>
</evidence>
<evidence type="ECO:0000256" key="5">
    <source>
        <dbReference type="SAM" id="MobiDB-lite"/>
    </source>
</evidence>
<evidence type="ECO:0000269" key="6">
    <source>
    </source>
</evidence>
<evidence type="ECO:0000269" key="7">
    <source>
    </source>
</evidence>
<evidence type="ECO:0000269" key="8">
    <source>
    </source>
</evidence>
<evidence type="ECO:0000303" key="9">
    <source>
    </source>
</evidence>
<evidence type="ECO:0000305" key="10"/>
<organism>
    <name type="scientific">Mus musculus</name>
    <name type="common">Mouse</name>
    <dbReference type="NCBI Taxonomy" id="10090"/>
    <lineage>
        <taxon>Eukaryota</taxon>
        <taxon>Metazoa</taxon>
        <taxon>Chordata</taxon>
        <taxon>Craniata</taxon>
        <taxon>Vertebrata</taxon>
        <taxon>Euteleostomi</taxon>
        <taxon>Mammalia</taxon>
        <taxon>Eutheria</taxon>
        <taxon>Euarchontoglires</taxon>
        <taxon>Glires</taxon>
        <taxon>Rodentia</taxon>
        <taxon>Myomorpha</taxon>
        <taxon>Muroidea</taxon>
        <taxon>Muridae</taxon>
        <taxon>Murinae</taxon>
        <taxon>Mus</taxon>
        <taxon>Mus</taxon>
    </lineage>
</organism>
<sequence>MAQFGGQKNPPWATQFTATAVSQPAALGVQQPSLLGASPTIYTQQTALAAAGLTTQTPANYQLTQTAALQQQAAAVLQQQYSQPQQALYSVQQQLQQPQQTILTQPAVALPTSLSLSTPQPAAQITVSYPTPRSSQQQTQPQKQRVFTGVVTKLHDTFGFVDEDVFFQLGAVKGKTPQVGDRVLVEATYNPNMPFKWNAQRIQTLPNQNQSQTQPLLKTPTAVIQPIVPQTTFGVQAQPQPQSLLQAQISAASITPLLQTQPQPLLQQPQQKAGLLQPPVRIVSQPQPARRLDPPSRFSGRNDRGDQVPNRKDDRSRERDRERRRSRERSPQRKRSRERSPRRERERSPRRVRRVVPRYTVQFSKFSLDCPSCDMMELRRRYQNLYIPSDFFDAQFTWVDAFPLSRPFQLGNYCNFYVMHREVESLEKNMAVLDPPDADHLYSAKVMLMASPSMEDLYHKSCALAEDPQDLRDGFQHPARLVKFLVGMKGKDEAMAIGGHWSPSLDGPNPEKDPSVLIKTAIRCCKALTGIDLSVCTQWYRFAEIRYHRPEETHKGRTVPAHVETVVLFFPDVWHCLPTRSEWETLSRGYKQQLVEKLQGERKKADGEQDEEEKDDGEVKEIATPTHWSKLDPKAMKVNDLRKELESRALSSKGLKSQLIARLTKQLKIEEQKEEQKELEKSEKEEEDEDDKKSEDDKEEEERKRQEEVERQRQERRYILPDEPAIIVHPNWAAKSGKFDCSIMSLSVLLDYRLEDNKEHSFEVSLFAELFNEMLQRDFGVRIYKSLLSLPEKEDKKDKEKKSKKEERKDKKEEREDDIDEPKPKRRKSGDDKDKKEDRDERKKEEKRKDDSKDDDETEEDNNQDEYDPMEAEEAEDEDDDREEEEVKRDDKRDVSRYCKDRPAKDKEKEKPQMVTVNRDLLMAFVYFDQSHCGYLLEKDLEEILYTLGLHLSRAQVKKLLNKVVLRESCFYRKLTDTSKDDENHEESEALQEDMLGNRLLLPTPTIKQESKDGEENVGLIVYNGAMVDVGSLLQKLEKSEKVRAEVEQKLQLLEEKTDEDGKTILNLENSNKSLSGELREVKKDLGQLQENLEVSENMNLQFENQLNKTLRNLSTVMDDIHTVLKKDNVKSEDRDEKSKENGSGV</sequence>
<proteinExistence type="evidence at protein level"/>
<gene>
    <name type="primary">Ccar1</name>
    <name type="synonym">Carp1</name>
</gene>
<dbReference type="EMBL" id="AF465615">
    <property type="protein sequence ID" value="AAO17318.1"/>
    <property type="molecule type" value="mRNA"/>
</dbReference>
<dbReference type="EMBL" id="AK012111">
    <property type="protein sequence ID" value="BAB28040.2"/>
    <property type="molecule type" value="mRNA"/>
</dbReference>
<dbReference type="EMBL" id="AK077151">
    <property type="protein sequence ID" value="BAC36646.1"/>
    <property type="molecule type" value="mRNA"/>
</dbReference>
<dbReference type="EMBL" id="AK078424">
    <property type="protein sequence ID" value="BAC37267.1"/>
    <property type="molecule type" value="mRNA"/>
</dbReference>
<dbReference type="EMBL" id="BC010199">
    <property type="protein sequence ID" value="AAH10199.1"/>
    <property type="status" value="ALT_SEQ"/>
    <property type="molecule type" value="mRNA"/>
</dbReference>
<dbReference type="EMBL" id="BC034174">
    <property type="protein sequence ID" value="AAH34174.1"/>
    <property type="status" value="ALT_SEQ"/>
    <property type="molecule type" value="mRNA"/>
</dbReference>
<dbReference type="EMBL" id="BC039939">
    <property type="protein sequence ID" value="AAH39939.1"/>
    <property type="status" value="ALT_SEQ"/>
    <property type="molecule type" value="mRNA"/>
</dbReference>
<dbReference type="EMBL" id="BC051052">
    <property type="protein sequence ID" value="AAH51052.1"/>
    <property type="status" value="ALT_SEQ"/>
    <property type="molecule type" value="mRNA"/>
</dbReference>
<dbReference type="EMBL" id="BC060130">
    <property type="protein sequence ID" value="AAH60130.1"/>
    <property type="status" value="ALT_SEQ"/>
    <property type="molecule type" value="mRNA"/>
</dbReference>
<dbReference type="EMBL" id="BC079652">
    <property type="protein sequence ID" value="AAH79652.1"/>
    <property type="status" value="ALT_SEQ"/>
    <property type="molecule type" value="mRNA"/>
</dbReference>
<dbReference type="CCDS" id="CCDS35922.1">
    <molecule id="Q8CH18-1"/>
</dbReference>
<dbReference type="RefSeq" id="NP_001416433.1">
    <molecule id="Q8CH18-1"/>
    <property type="nucleotide sequence ID" value="NM_001429504.1"/>
</dbReference>
<dbReference type="RefSeq" id="NP_001416434.1">
    <molecule id="Q8CH18-1"/>
    <property type="nucleotide sequence ID" value="NM_001429505.1"/>
</dbReference>
<dbReference type="RefSeq" id="NP_001416439.1">
    <molecule id="Q8CH18-2"/>
    <property type="nucleotide sequence ID" value="NM_001429510.1"/>
</dbReference>
<dbReference type="RefSeq" id="NP_001416440.1">
    <molecule id="Q8CH18-2"/>
    <property type="nucleotide sequence ID" value="NM_001429511.1"/>
</dbReference>
<dbReference type="RefSeq" id="NP_080477.1">
    <molecule id="Q8CH18-1"/>
    <property type="nucleotide sequence ID" value="NM_026201.4"/>
</dbReference>
<dbReference type="RefSeq" id="XP_006514057.1">
    <molecule id="Q8CH18-1"/>
    <property type="nucleotide sequence ID" value="XM_006513994.5"/>
</dbReference>
<dbReference type="RefSeq" id="XP_006514058.1">
    <molecule id="Q8CH18-1"/>
    <property type="nucleotide sequence ID" value="XM_006513995.4"/>
</dbReference>
<dbReference type="RefSeq" id="XP_006514059.1">
    <property type="nucleotide sequence ID" value="XM_006513996.3"/>
</dbReference>
<dbReference type="RefSeq" id="XP_006514060.1">
    <molecule id="Q8CH18-3"/>
    <property type="nucleotide sequence ID" value="XM_006513997.4"/>
</dbReference>
<dbReference type="RefSeq" id="XP_011241839.1">
    <property type="nucleotide sequence ID" value="XM_011243537.2"/>
</dbReference>
<dbReference type="RefSeq" id="XP_036011856.1">
    <molecule id="Q8CH18-3"/>
    <property type="nucleotide sequence ID" value="XM_036155963.1"/>
</dbReference>
<dbReference type="SMR" id="Q8CH18"/>
<dbReference type="BioGRID" id="212231">
    <property type="interactions" value="11"/>
</dbReference>
<dbReference type="FunCoup" id="Q8CH18">
    <property type="interactions" value="4906"/>
</dbReference>
<dbReference type="IntAct" id="Q8CH18">
    <property type="interactions" value="7"/>
</dbReference>
<dbReference type="MINT" id="Q8CH18"/>
<dbReference type="STRING" id="10090.ENSMUSP00000020268"/>
<dbReference type="GlyGen" id="Q8CH18">
    <property type="glycosylation" value="2 sites, 1 N-linked glycan (1 site), 1 O-linked glycan (1 site)"/>
</dbReference>
<dbReference type="iPTMnet" id="Q8CH18"/>
<dbReference type="PhosphoSitePlus" id="Q8CH18"/>
<dbReference type="SwissPalm" id="Q8CH18"/>
<dbReference type="jPOST" id="Q8CH18"/>
<dbReference type="PaxDb" id="10090-ENSMUSP00000020268"/>
<dbReference type="PeptideAtlas" id="Q8CH18"/>
<dbReference type="ProteomicsDB" id="265357">
    <molecule id="Q8CH18-1"/>
</dbReference>
<dbReference type="ProteomicsDB" id="265358">
    <molecule id="Q8CH18-2"/>
</dbReference>
<dbReference type="ProteomicsDB" id="265359">
    <molecule id="Q8CH18-3"/>
</dbReference>
<dbReference type="Pumba" id="Q8CH18"/>
<dbReference type="Antibodypedia" id="2118">
    <property type="antibodies" value="216 antibodies from 30 providers"/>
</dbReference>
<dbReference type="DNASU" id="67500"/>
<dbReference type="Ensembl" id="ENSMUST00000020268.7">
    <molecule id="Q8CH18-1"/>
    <property type="protein sequence ID" value="ENSMUSP00000020268.6"/>
    <property type="gene ID" value="ENSMUSG00000020074.8"/>
</dbReference>
<dbReference type="Ensembl" id="ENSMUST00000219527.2">
    <molecule id="Q8CH18-1"/>
    <property type="protein sequence ID" value="ENSMUSP00000151895.2"/>
    <property type="gene ID" value="ENSMUSG00000020074.8"/>
</dbReference>
<dbReference type="GeneID" id="67500"/>
<dbReference type="KEGG" id="mmu:67500"/>
<dbReference type="UCSC" id="uc007fja.2">
    <molecule id="Q8CH18-1"/>
    <property type="organism name" value="mouse"/>
</dbReference>
<dbReference type="UCSC" id="uc007fjc.2">
    <molecule id="Q8CH18-2"/>
    <property type="organism name" value="mouse"/>
</dbReference>
<dbReference type="UCSC" id="uc011xff.1">
    <molecule id="Q8CH18-3"/>
    <property type="organism name" value="mouse"/>
</dbReference>
<dbReference type="AGR" id="MGI:1914750"/>
<dbReference type="CTD" id="55749"/>
<dbReference type="MGI" id="MGI:1914750">
    <property type="gene designation" value="Ccar1"/>
</dbReference>
<dbReference type="VEuPathDB" id="HostDB:ENSMUSG00000020074"/>
<dbReference type="eggNOG" id="KOG4246">
    <property type="taxonomic scope" value="Eukaryota"/>
</dbReference>
<dbReference type="GeneTree" id="ENSGT00530000063672"/>
<dbReference type="HOGENOM" id="CLU_008030_0_0_1"/>
<dbReference type="InParanoid" id="Q8CH18"/>
<dbReference type="OMA" id="MVEASYN"/>
<dbReference type="OrthoDB" id="21006at2759"/>
<dbReference type="PhylomeDB" id="Q8CH18"/>
<dbReference type="TreeFam" id="TF316387"/>
<dbReference type="BioGRID-ORCS" id="67500">
    <property type="hits" value="9 hits in 79 CRISPR screens"/>
</dbReference>
<dbReference type="ChiTaRS" id="Ccar1">
    <property type="organism name" value="mouse"/>
</dbReference>
<dbReference type="PRO" id="PR:Q8CH18"/>
<dbReference type="Proteomes" id="UP000000589">
    <property type="component" value="Chromosome 10"/>
</dbReference>
<dbReference type="RNAct" id="Q8CH18">
    <property type="molecule type" value="protein"/>
</dbReference>
<dbReference type="Bgee" id="ENSMUSG00000020074">
    <property type="expression patterns" value="Expressed in undifferentiated genital tubercle and 240 other cell types or tissues"/>
</dbReference>
<dbReference type="ExpressionAtlas" id="Q8CH18">
    <property type="expression patterns" value="baseline and differential"/>
</dbReference>
<dbReference type="GO" id="GO:0005641">
    <property type="term" value="C:nuclear envelope lumen"/>
    <property type="evidence" value="ECO:0000266"/>
    <property type="project" value="MGI"/>
</dbReference>
<dbReference type="GO" id="GO:0048471">
    <property type="term" value="C:perinuclear region of cytoplasm"/>
    <property type="evidence" value="ECO:0007669"/>
    <property type="project" value="UniProtKB-SubCell"/>
</dbReference>
<dbReference type="GO" id="GO:0000978">
    <property type="term" value="F:RNA polymerase II cis-regulatory region sequence-specific DNA binding"/>
    <property type="evidence" value="ECO:0000250"/>
    <property type="project" value="UniProtKB"/>
</dbReference>
<dbReference type="GO" id="GO:0003713">
    <property type="term" value="F:transcription coactivator activity"/>
    <property type="evidence" value="ECO:0000315"/>
    <property type="project" value="UniProtKB"/>
</dbReference>
<dbReference type="GO" id="GO:0003714">
    <property type="term" value="F:transcription corepressor activity"/>
    <property type="evidence" value="ECO:0000250"/>
    <property type="project" value="UniProtKB"/>
</dbReference>
<dbReference type="GO" id="GO:0006915">
    <property type="term" value="P:apoptotic process"/>
    <property type="evidence" value="ECO:0007669"/>
    <property type="project" value="UniProtKB-KW"/>
</dbReference>
<dbReference type="GO" id="GO:0043065">
    <property type="term" value="P:positive regulation of apoptotic process"/>
    <property type="evidence" value="ECO:0000266"/>
    <property type="project" value="MGI"/>
</dbReference>
<dbReference type="GO" id="GO:0030335">
    <property type="term" value="P:positive regulation of cell migration"/>
    <property type="evidence" value="ECO:0000250"/>
    <property type="project" value="UniProtKB"/>
</dbReference>
<dbReference type="GO" id="GO:0008284">
    <property type="term" value="P:positive regulation of cell population proliferation"/>
    <property type="evidence" value="ECO:0000250"/>
    <property type="project" value="UniProtKB"/>
</dbReference>
<dbReference type="FunFam" id="2.40.50.140:FF:000216">
    <property type="entry name" value="Cell division cycle and apoptosis regulator 1"/>
    <property type="match status" value="1"/>
</dbReference>
<dbReference type="FunFam" id="1.10.720.30:FF:000006">
    <property type="entry name" value="Cell division cycle and apoptosis regulator protein 1"/>
    <property type="match status" value="1"/>
</dbReference>
<dbReference type="Gene3D" id="1.10.720.30">
    <property type="entry name" value="SAP domain"/>
    <property type="match status" value="1"/>
</dbReference>
<dbReference type="InterPro" id="IPR045354">
    <property type="entry name" value="BURAN"/>
</dbReference>
<dbReference type="InterPro" id="IPR025224">
    <property type="entry name" value="CCAR1/CCAR2"/>
</dbReference>
<dbReference type="InterPro" id="IPR025954">
    <property type="entry name" value="DBC1/CARP1_inactive_NUDIX_dom"/>
</dbReference>
<dbReference type="InterPro" id="IPR011992">
    <property type="entry name" value="EF-hand-dom_pair"/>
</dbReference>
<dbReference type="InterPro" id="IPR045353">
    <property type="entry name" value="LAIKA"/>
</dbReference>
<dbReference type="InterPro" id="IPR025223">
    <property type="entry name" value="S1-like_RNA-bd_dom"/>
</dbReference>
<dbReference type="InterPro" id="IPR003034">
    <property type="entry name" value="SAP_dom"/>
</dbReference>
<dbReference type="InterPro" id="IPR036361">
    <property type="entry name" value="SAP_dom_sf"/>
</dbReference>
<dbReference type="PANTHER" id="PTHR14304">
    <property type="entry name" value="CELL DIVISION CYCLE AND APOPTOSIS REGULATOR PROTEIN"/>
    <property type="match status" value="1"/>
</dbReference>
<dbReference type="PANTHER" id="PTHR14304:SF14">
    <property type="entry name" value="CELL DIVISION CYCLE AND APOPTOSIS REGULATOR PROTEIN 1"/>
    <property type="match status" value="1"/>
</dbReference>
<dbReference type="Pfam" id="PF19257">
    <property type="entry name" value="BURAN"/>
    <property type="match status" value="1"/>
</dbReference>
<dbReference type="Pfam" id="PF14443">
    <property type="entry name" value="DBC1"/>
    <property type="match status" value="1"/>
</dbReference>
<dbReference type="Pfam" id="PF19256">
    <property type="entry name" value="LAIKA"/>
    <property type="match status" value="1"/>
</dbReference>
<dbReference type="Pfam" id="PF14444">
    <property type="entry name" value="S1-like"/>
    <property type="match status" value="1"/>
</dbReference>
<dbReference type="Pfam" id="PF02037">
    <property type="entry name" value="SAP"/>
    <property type="match status" value="1"/>
</dbReference>
<dbReference type="SMART" id="SM01122">
    <property type="entry name" value="DBC1"/>
    <property type="match status" value="1"/>
</dbReference>
<dbReference type="SMART" id="SM00513">
    <property type="entry name" value="SAP"/>
    <property type="match status" value="1"/>
</dbReference>
<dbReference type="SUPFAM" id="SSF47473">
    <property type="entry name" value="EF-hand"/>
    <property type="match status" value="1"/>
</dbReference>
<dbReference type="SUPFAM" id="SSF68906">
    <property type="entry name" value="SAP domain"/>
    <property type="match status" value="1"/>
</dbReference>
<dbReference type="PROSITE" id="PS50800">
    <property type="entry name" value="SAP"/>
    <property type="match status" value="1"/>
</dbReference>
<reference key="1">
    <citation type="submission" date="2002-01" db="EMBL/GenBank/DDBJ databases">
        <title>TAZ binding partners identified by mass spectrometry.</title>
        <authorList>
            <person name="Tian Y."/>
            <person name="Li D."/>
            <person name="Benjamin T."/>
        </authorList>
    </citation>
    <scope>NUCLEOTIDE SEQUENCE [MRNA] (ISOFORM 1)</scope>
    <source>
        <strain>Swiss Webster</strain>
    </source>
</reference>
<reference key="2">
    <citation type="journal article" date="2005" name="Science">
        <title>The transcriptional landscape of the mammalian genome.</title>
        <authorList>
            <person name="Carninci P."/>
            <person name="Kasukawa T."/>
            <person name="Katayama S."/>
            <person name="Gough J."/>
            <person name="Frith M.C."/>
            <person name="Maeda N."/>
            <person name="Oyama R."/>
            <person name="Ravasi T."/>
            <person name="Lenhard B."/>
            <person name="Wells C."/>
            <person name="Kodzius R."/>
            <person name="Shimokawa K."/>
            <person name="Bajic V.B."/>
            <person name="Brenner S.E."/>
            <person name="Batalov S."/>
            <person name="Forrest A.R."/>
            <person name="Zavolan M."/>
            <person name="Davis M.J."/>
            <person name="Wilming L.G."/>
            <person name="Aidinis V."/>
            <person name="Allen J.E."/>
            <person name="Ambesi-Impiombato A."/>
            <person name="Apweiler R."/>
            <person name="Aturaliya R.N."/>
            <person name="Bailey T.L."/>
            <person name="Bansal M."/>
            <person name="Baxter L."/>
            <person name="Beisel K.W."/>
            <person name="Bersano T."/>
            <person name="Bono H."/>
            <person name="Chalk A.M."/>
            <person name="Chiu K.P."/>
            <person name="Choudhary V."/>
            <person name="Christoffels A."/>
            <person name="Clutterbuck D.R."/>
            <person name="Crowe M.L."/>
            <person name="Dalla E."/>
            <person name="Dalrymple B.P."/>
            <person name="de Bono B."/>
            <person name="Della Gatta G."/>
            <person name="di Bernardo D."/>
            <person name="Down T."/>
            <person name="Engstrom P."/>
            <person name="Fagiolini M."/>
            <person name="Faulkner G."/>
            <person name="Fletcher C.F."/>
            <person name="Fukushima T."/>
            <person name="Furuno M."/>
            <person name="Futaki S."/>
            <person name="Gariboldi M."/>
            <person name="Georgii-Hemming P."/>
            <person name="Gingeras T.R."/>
            <person name="Gojobori T."/>
            <person name="Green R.E."/>
            <person name="Gustincich S."/>
            <person name="Harbers M."/>
            <person name="Hayashi Y."/>
            <person name="Hensch T.K."/>
            <person name="Hirokawa N."/>
            <person name="Hill D."/>
            <person name="Huminiecki L."/>
            <person name="Iacono M."/>
            <person name="Ikeo K."/>
            <person name="Iwama A."/>
            <person name="Ishikawa T."/>
            <person name="Jakt M."/>
            <person name="Kanapin A."/>
            <person name="Katoh M."/>
            <person name="Kawasawa Y."/>
            <person name="Kelso J."/>
            <person name="Kitamura H."/>
            <person name="Kitano H."/>
            <person name="Kollias G."/>
            <person name="Krishnan S.P."/>
            <person name="Kruger A."/>
            <person name="Kummerfeld S.K."/>
            <person name="Kurochkin I.V."/>
            <person name="Lareau L.F."/>
            <person name="Lazarevic D."/>
            <person name="Lipovich L."/>
            <person name="Liu J."/>
            <person name="Liuni S."/>
            <person name="McWilliam S."/>
            <person name="Madan Babu M."/>
            <person name="Madera M."/>
            <person name="Marchionni L."/>
            <person name="Matsuda H."/>
            <person name="Matsuzawa S."/>
            <person name="Miki H."/>
            <person name="Mignone F."/>
            <person name="Miyake S."/>
            <person name="Morris K."/>
            <person name="Mottagui-Tabar S."/>
            <person name="Mulder N."/>
            <person name="Nakano N."/>
            <person name="Nakauchi H."/>
            <person name="Ng P."/>
            <person name="Nilsson R."/>
            <person name="Nishiguchi S."/>
            <person name="Nishikawa S."/>
            <person name="Nori F."/>
            <person name="Ohara O."/>
            <person name="Okazaki Y."/>
            <person name="Orlando V."/>
            <person name="Pang K.C."/>
            <person name="Pavan W.J."/>
            <person name="Pavesi G."/>
            <person name="Pesole G."/>
            <person name="Petrovsky N."/>
            <person name="Piazza S."/>
            <person name="Reed J."/>
            <person name="Reid J.F."/>
            <person name="Ring B.Z."/>
            <person name="Ringwald M."/>
            <person name="Rost B."/>
            <person name="Ruan Y."/>
            <person name="Salzberg S.L."/>
            <person name="Sandelin A."/>
            <person name="Schneider C."/>
            <person name="Schoenbach C."/>
            <person name="Sekiguchi K."/>
            <person name="Semple C.A."/>
            <person name="Seno S."/>
            <person name="Sessa L."/>
            <person name="Sheng Y."/>
            <person name="Shibata Y."/>
            <person name="Shimada H."/>
            <person name="Shimada K."/>
            <person name="Silva D."/>
            <person name="Sinclair B."/>
            <person name="Sperling S."/>
            <person name="Stupka E."/>
            <person name="Sugiura K."/>
            <person name="Sultana R."/>
            <person name="Takenaka Y."/>
            <person name="Taki K."/>
            <person name="Tammoja K."/>
            <person name="Tan S.L."/>
            <person name="Tang S."/>
            <person name="Taylor M.S."/>
            <person name="Tegner J."/>
            <person name="Teichmann S.A."/>
            <person name="Ueda H.R."/>
            <person name="van Nimwegen E."/>
            <person name="Verardo R."/>
            <person name="Wei C.L."/>
            <person name="Yagi K."/>
            <person name="Yamanishi H."/>
            <person name="Zabarovsky E."/>
            <person name="Zhu S."/>
            <person name="Zimmer A."/>
            <person name="Hide W."/>
            <person name="Bult C."/>
            <person name="Grimmond S.M."/>
            <person name="Teasdale R.D."/>
            <person name="Liu E.T."/>
            <person name="Brusic V."/>
            <person name="Quackenbush J."/>
            <person name="Wahlestedt C."/>
            <person name="Mattick J.S."/>
            <person name="Hume D.A."/>
            <person name="Kai C."/>
            <person name="Sasaki D."/>
            <person name="Tomaru Y."/>
            <person name="Fukuda S."/>
            <person name="Kanamori-Katayama M."/>
            <person name="Suzuki M."/>
            <person name="Aoki J."/>
            <person name="Arakawa T."/>
            <person name="Iida J."/>
            <person name="Imamura K."/>
            <person name="Itoh M."/>
            <person name="Kato T."/>
            <person name="Kawaji H."/>
            <person name="Kawagashira N."/>
            <person name="Kawashima T."/>
            <person name="Kojima M."/>
            <person name="Kondo S."/>
            <person name="Konno H."/>
            <person name="Nakano K."/>
            <person name="Ninomiya N."/>
            <person name="Nishio T."/>
            <person name="Okada M."/>
            <person name="Plessy C."/>
            <person name="Shibata K."/>
            <person name="Shiraki T."/>
            <person name="Suzuki S."/>
            <person name="Tagami M."/>
            <person name="Waki K."/>
            <person name="Watahiki A."/>
            <person name="Okamura-Oho Y."/>
            <person name="Suzuki H."/>
            <person name="Kawai J."/>
            <person name="Hayashizaki Y."/>
        </authorList>
    </citation>
    <scope>NUCLEOTIDE SEQUENCE [LARGE SCALE MRNA] (ISOFORM 1)</scope>
    <source>
        <strain>C57BL/6J</strain>
        <tissue>Embryo</tissue>
        <tissue>Testis</tissue>
        <tissue>Wolffian duct</tissue>
    </source>
</reference>
<reference key="3">
    <citation type="journal article" date="2004" name="Genome Res.">
        <title>The status, quality, and expansion of the NIH full-length cDNA project: the Mammalian Gene Collection (MGC).</title>
        <authorList>
            <consortium name="The MGC Project Team"/>
        </authorList>
    </citation>
    <scope>NUCLEOTIDE SEQUENCE [LARGE SCALE MRNA] (ISOFORM 2)</scope>
    <scope>NUCLEOTIDE SEQUENCE [LARGE SCALE MRNA] OF 1-833 (ISOFORM 1)</scope>
    <scope>NUCLEOTIDE SEQUENCE [LARGE SCALE MRNA] OF 1-797 (ISOFORM 3)</scope>
    <source>
        <strain>C57BL/6J</strain>
        <strain>Czech II</strain>
        <strain>FVB/N</strain>
        <tissue>Brain</tissue>
        <tissue>Kidney</tissue>
        <tissue>Mammary tumor</tissue>
    </source>
</reference>
<reference key="4">
    <citation type="journal article" date="2008" name="Mol. Cell">
        <title>CCAR1, a key regulator of mediator complex recruitment to nuclear receptor transcription complexes.</title>
        <authorList>
            <person name="Kim J.H."/>
            <person name="Yang C.K."/>
            <person name="Heo K."/>
            <person name="Roeder R.G."/>
            <person name="An W."/>
            <person name="Stallcup M.R."/>
        </authorList>
    </citation>
    <scope>FUNCTION</scope>
    <scope>INTERACTION WITH CALCOCO1; ESR1; NR3C AND TP53</scope>
</reference>
<reference key="5">
    <citation type="journal article" date="2010" name="Cell">
        <title>A tissue-specific atlas of mouse protein phosphorylation and expression.</title>
        <authorList>
            <person name="Huttlin E.L."/>
            <person name="Jedrychowski M.P."/>
            <person name="Elias J.E."/>
            <person name="Goswami T."/>
            <person name="Rad R."/>
            <person name="Beausoleil S.A."/>
            <person name="Villen J."/>
            <person name="Haas W."/>
            <person name="Sowa M.E."/>
            <person name="Gygi S.P."/>
        </authorList>
    </citation>
    <scope>IDENTIFICATION BY MASS SPECTROMETRY [LARGE SCALE ANALYSIS]</scope>
    <source>
        <tissue>Brain</tissue>
        <tissue>Brown adipose tissue</tissue>
        <tissue>Heart</tissue>
        <tissue>Kidney</tissue>
        <tissue>Pancreas</tissue>
        <tissue>Spleen</tissue>
        <tissue>Testis</tissue>
    </source>
</reference>
<reference key="6">
    <citation type="journal article" date="2013" name="Nucleic Acids Res.">
        <title>CCAR1 promotes chromatin loading of androgen receptor (AR) transcription complex by stabilizing the association between AR and GATA2.</title>
        <authorList>
            <person name="Seo W.Y."/>
            <person name="Jeong B.C."/>
            <person name="Yu E.J."/>
            <person name="Kim H.J."/>
            <person name="Kim S.H."/>
            <person name="Lim J.E."/>
            <person name="Kwon G.Y."/>
            <person name="Lee H.M."/>
            <person name="Kim J.H."/>
        </authorList>
    </citation>
    <scope>FUNCTION</scope>
</reference>
<reference key="7">
    <citation type="journal article" date="2014" name="Genes Cells">
        <title>CCAR1/CoCoA pair-mediated recruitment of the Mediator defines a novel pathway for GATA1 function.</title>
        <authorList>
            <person name="Mizuta S."/>
            <person name="Minami T."/>
            <person name="Fujita H."/>
            <person name="Kaminaga C."/>
            <person name="Matsui K."/>
            <person name="Ishino R."/>
            <person name="Fujita A."/>
            <person name="Oda K."/>
            <person name="Kawai A."/>
            <person name="Hasegawa N."/>
            <person name="Urahama N."/>
            <person name="Roeder R.G."/>
            <person name="Ito M."/>
        </authorList>
    </citation>
    <scope>FUNCTION</scope>
    <scope>INTERACTION WITH MED1; GATA1 AND CALCOCO1</scope>
</reference>
<name>CCAR1_MOUSE</name>
<protein>
    <recommendedName>
        <fullName>Cell division cycle and apoptosis regulator protein 1</fullName>
    </recommendedName>
    <alternativeName>
        <fullName>Cell cycle and apoptosis regulatory protein 1</fullName>
        <shortName>CARP-1</shortName>
    </alternativeName>
</protein>
<keyword id="KW-0010">Activator</keyword>
<keyword id="KW-0025">Alternative splicing</keyword>
<keyword id="KW-0053">Apoptosis</keyword>
<keyword id="KW-0131">Cell cycle</keyword>
<keyword id="KW-0175">Coiled coil</keyword>
<keyword id="KW-0963">Cytoplasm</keyword>
<keyword id="KW-1017">Isopeptide bond</keyword>
<keyword id="KW-0597">Phosphoprotein</keyword>
<keyword id="KW-1185">Reference proteome</keyword>
<keyword id="KW-0678">Repressor</keyword>
<keyword id="KW-0804">Transcription</keyword>
<keyword id="KW-0805">Transcription regulation</keyword>
<keyword id="KW-0832">Ubl conjugation</keyword>
<comment type="function">
    <text evidence="2 7 8">Associates with components of the Mediator and p160 coactivator complexes that play a role as intermediaries transducing regulatory signals from upstream transcriptional activator proteins to basal transcription machinery at the core promoter. Recruited to endogenous nuclear receptor target genes in response to the appropriate hormone. Also functions as a p53 coactivator. May thus play an important role in transcriptional regulation. May be involved in apoptosis signaling in the presence of the retinoid CD437. Apoptosis induction involves sequestration of 14-3-3 protein(s) and mediated altered expression of multiple cell cycle regulatory genes including MYC, CCNB1 and CDKN1A. Plays a role in cell cycle progression and/or cell proliferation (By similarity). In association with CALCOCO1 enhances GATA1- and MED1-mediated transcriptional activation from the gamma-globin promoter during erythroid differentiation of K562 erythroleukemia cells (PubMed:24245781). Can act as a both a coactivator and corepressor of AR-mediated transcription. Contributes to chromatin looping and AR transcription complex assembly by stabilizing AR-GATA2 association on chromatin and facilitating MED1 and RNA polymerase II recruitment to AR-binding sites. May play an important role in the growth and tumorigenesis of prostate cancer cells (PubMed:23887938).</text>
</comment>
<comment type="subunit">
    <text evidence="2 6 8">Directly interacts with ESR1, NR3C1 and p53/TP53. Interacts (via N-terminus) with CALCOCO1. Interacts with MED1 and GATA1. Interacts with AR and GATA2 (By similarity).</text>
</comment>
<comment type="subcellular location">
    <subcellularLocation>
        <location evidence="1">Cytoplasm</location>
        <location evidence="1">Perinuclear region</location>
    </subcellularLocation>
</comment>
<comment type="alternative products">
    <event type="alternative splicing"/>
    <isoform>
        <id>Q8CH18-1</id>
        <name>1</name>
        <sequence type="displayed"/>
    </isoform>
    <isoform>
        <id>Q8CH18-2</id>
        <name>2</name>
        <sequence type="described" ref="VSP_018054 VSP_018055"/>
    </isoform>
    <isoform>
        <id>Q8CH18-3</id>
        <name>3</name>
        <sequence type="described" ref="VSP_037737"/>
    </isoform>
</comment>
<comment type="sequence caution" evidence="10">
    <conflict type="miscellaneous discrepancy">
        <sequence resource="EMBL-CDS" id="AAH10199"/>
    </conflict>
    <text>Contaminating sequence. Potential poly-A sequence.</text>
</comment>
<comment type="sequence caution" evidence="10">
    <conflict type="miscellaneous discrepancy">
        <sequence resource="EMBL-CDS" id="AAH34174"/>
    </conflict>
    <text>Contaminating sequence. Potential poly-A sequence.</text>
</comment>
<comment type="sequence caution" evidence="10">
    <conflict type="miscellaneous discrepancy">
        <sequence resource="EMBL-CDS" id="AAH39939"/>
    </conflict>
    <text>Contaminating sequence. Potential poly-A sequence.</text>
</comment>
<comment type="sequence caution" evidence="10">
    <conflict type="miscellaneous discrepancy">
        <sequence resource="EMBL-CDS" id="AAH51052"/>
    </conflict>
    <text>Contaminating sequence. Potential poly-A sequence.</text>
</comment>
<comment type="sequence caution" evidence="10">
    <conflict type="miscellaneous discrepancy">
        <sequence resource="EMBL-CDS" id="AAH60130"/>
    </conflict>
    <text>Contaminating sequence. Potential poly-A sequence.</text>
</comment>
<comment type="sequence caution" evidence="10">
    <conflict type="miscellaneous discrepancy">
        <sequence resource="EMBL-CDS" id="AAH79652"/>
    </conflict>
    <text>Contaminating sequence. Potential poly-A sequence.</text>
</comment>